<name>CALCA_MOUSE</name>
<dbReference type="EMBL" id="AF330212">
    <property type="protein sequence ID" value="AAK06841.1"/>
    <property type="molecule type" value="mRNA"/>
</dbReference>
<dbReference type="EMBL" id="AF325522">
    <property type="protein sequence ID" value="AAK18181.1"/>
    <property type="molecule type" value="Genomic_DNA"/>
</dbReference>
<dbReference type="EMBL" id="AF325521">
    <property type="protein sequence ID" value="AAK18181.1"/>
    <property type="status" value="JOINED"/>
    <property type="molecule type" value="Genomic_DNA"/>
</dbReference>
<dbReference type="EMBL" id="BC028771">
    <property type="protein sequence ID" value="AAH28771.1"/>
    <property type="molecule type" value="mRNA"/>
</dbReference>
<dbReference type="CCDS" id="CCDS21762.1">
    <molecule id="Q99JA0-1"/>
</dbReference>
<dbReference type="RefSeq" id="NP_001029126.1">
    <molecule id="Q99JA0-1"/>
    <property type="nucleotide sequence ID" value="NM_001033954.3"/>
</dbReference>
<dbReference type="RefSeq" id="NP_001276373.1">
    <molecule id="Q99JA0-1"/>
    <property type="nucleotide sequence ID" value="NM_001289444.1"/>
</dbReference>
<dbReference type="RefSeq" id="XP_011239962.1">
    <molecule id="Q99JA0-1"/>
    <property type="nucleotide sequence ID" value="XM_011241660.4"/>
</dbReference>
<dbReference type="RefSeq" id="XP_030097892.1">
    <molecule id="Q99JA0-1"/>
    <property type="nucleotide sequence ID" value="XM_030242032.1"/>
</dbReference>
<dbReference type="DIP" id="DIP-60043N"/>
<dbReference type="IntAct" id="Q99JA0">
    <property type="interactions" value="2"/>
</dbReference>
<dbReference type="ProteomicsDB" id="281760">
    <molecule id="Q99JA0-1"/>
</dbReference>
<dbReference type="Antibodypedia" id="3493">
    <property type="antibodies" value="1815 antibodies from 50 providers"/>
</dbReference>
<dbReference type="DNASU" id="12310"/>
<dbReference type="Ensembl" id="ENSMUST00000032906.11">
    <molecule id="Q99JA0-1"/>
    <property type="protein sequence ID" value="ENSMUSP00000032906.5"/>
    <property type="gene ID" value="ENSMUSG00000030669.14"/>
</dbReference>
<dbReference type="GeneID" id="12310"/>
<dbReference type="KEGG" id="mmu:12310"/>
<dbReference type="UCSC" id="uc009jif.2">
    <molecule id="Q99JA0-1"/>
    <property type="organism name" value="mouse"/>
</dbReference>
<dbReference type="AGR" id="MGI:2151253"/>
<dbReference type="CTD" id="796"/>
<dbReference type="MGI" id="MGI:2151253">
    <property type="gene designation" value="Calca"/>
</dbReference>
<dbReference type="VEuPathDB" id="HostDB:ENSMUSG00000030669"/>
<dbReference type="GeneTree" id="ENSGT00940000162876"/>
<dbReference type="HOGENOM" id="CLU_122444_1_0_1"/>
<dbReference type="OMA" id="QMKASAG"/>
<dbReference type="OrthoDB" id="9929923at2759"/>
<dbReference type="BioGRID-ORCS" id="12310">
    <property type="hits" value="0 hits in 79 CRISPR screens"/>
</dbReference>
<dbReference type="ChiTaRS" id="Calca">
    <property type="organism name" value="mouse"/>
</dbReference>
<dbReference type="Proteomes" id="UP000000589">
    <property type="component" value="Chromosome 7"/>
</dbReference>
<dbReference type="Bgee" id="ENSMUSG00000030669">
    <property type="expression patterns" value="Expressed in facial nucleus and 100 other cell types or tissues"/>
</dbReference>
<dbReference type="ExpressionAtlas" id="Q99JA0">
    <property type="expression patterns" value="baseline and differential"/>
</dbReference>
<dbReference type="GO" id="GO:0030424">
    <property type="term" value="C:axon"/>
    <property type="evidence" value="ECO:0000314"/>
    <property type="project" value="MGI"/>
</dbReference>
<dbReference type="GO" id="GO:0005737">
    <property type="term" value="C:cytoplasm"/>
    <property type="evidence" value="ECO:0000314"/>
    <property type="project" value="MGI"/>
</dbReference>
<dbReference type="GO" id="GO:0005576">
    <property type="term" value="C:extracellular region"/>
    <property type="evidence" value="ECO:0000314"/>
    <property type="project" value="MGI"/>
</dbReference>
<dbReference type="GO" id="GO:0005615">
    <property type="term" value="C:extracellular space"/>
    <property type="evidence" value="ECO:0000266"/>
    <property type="project" value="MGI"/>
</dbReference>
<dbReference type="GO" id="GO:0043005">
    <property type="term" value="C:neuron projection"/>
    <property type="evidence" value="ECO:0000314"/>
    <property type="project" value="MGI"/>
</dbReference>
<dbReference type="GO" id="GO:0043025">
    <property type="term" value="C:neuronal cell body"/>
    <property type="evidence" value="ECO:0000314"/>
    <property type="project" value="MGI"/>
</dbReference>
<dbReference type="GO" id="GO:0043195">
    <property type="term" value="C:terminal bouton"/>
    <property type="evidence" value="ECO:0000314"/>
    <property type="project" value="MGI"/>
</dbReference>
<dbReference type="GO" id="GO:0031716">
    <property type="term" value="F:calcitonin receptor binding"/>
    <property type="evidence" value="ECO:0000314"/>
    <property type="project" value="MGI"/>
</dbReference>
<dbReference type="GO" id="GO:0005179">
    <property type="term" value="F:hormone activity"/>
    <property type="evidence" value="ECO:0007669"/>
    <property type="project" value="UniProtKB-KW"/>
</dbReference>
<dbReference type="GO" id="GO:0005102">
    <property type="term" value="F:signaling receptor binding"/>
    <property type="evidence" value="ECO:0000314"/>
    <property type="project" value="MGI"/>
</dbReference>
<dbReference type="GO" id="GO:0007189">
    <property type="term" value="P:adenylate cyclase-activating G protein-coupled receptor signaling pathway"/>
    <property type="evidence" value="ECO:0000316"/>
    <property type="project" value="MGI"/>
</dbReference>
<dbReference type="GO" id="GO:0001984">
    <property type="term" value="P:artery vasodilation involved in baroreceptor response to increased systemic arterial blood pressure"/>
    <property type="evidence" value="ECO:0000315"/>
    <property type="project" value="MGI"/>
</dbReference>
<dbReference type="GO" id="GO:1990090">
    <property type="term" value="P:cellular response to nerve growth factor stimulus"/>
    <property type="evidence" value="ECO:0000314"/>
    <property type="project" value="MGI"/>
</dbReference>
<dbReference type="GO" id="GO:0050965">
    <property type="term" value="P:detection of temperature stimulus involved in sensory perception of pain"/>
    <property type="evidence" value="ECO:0000315"/>
    <property type="project" value="MGI"/>
</dbReference>
<dbReference type="GO" id="GO:0007631">
    <property type="term" value="P:feeding behavior"/>
    <property type="evidence" value="ECO:0000314"/>
    <property type="project" value="MGI"/>
</dbReference>
<dbReference type="GO" id="GO:0006954">
    <property type="term" value="P:inflammatory response"/>
    <property type="evidence" value="ECO:0000314"/>
    <property type="project" value="MGI"/>
</dbReference>
<dbReference type="GO" id="GO:0006874">
    <property type="term" value="P:intracellular calcium ion homeostasis"/>
    <property type="evidence" value="ECO:0000316"/>
    <property type="project" value="MGI"/>
</dbReference>
<dbReference type="GO" id="GO:0045776">
    <property type="term" value="P:negative regulation of blood pressure"/>
    <property type="evidence" value="ECO:0000315"/>
    <property type="project" value="MGI"/>
</dbReference>
<dbReference type="GO" id="GO:0031645">
    <property type="term" value="P:negative regulation of nervous system process"/>
    <property type="evidence" value="ECO:0000315"/>
    <property type="project" value="MGI"/>
</dbReference>
<dbReference type="GO" id="GO:0030279">
    <property type="term" value="P:negative regulation of ossification"/>
    <property type="evidence" value="ECO:0000315"/>
    <property type="project" value="MGI"/>
</dbReference>
<dbReference type="GO" id="GO:0045986">
    <property type="term" value="P:negative regulation of smooth muscle contraction"/>
    <property type="evidence" value="ECO:0000314"/>
    <property type="project" value="MGI"/>
</dbReference>
<dbReference type="GO" id="GO:0001976">
    <property type="term" value="P:nervous system process involved in regulation of systemic arterial blood pressure"/>
    <property type="evidence" value="ECO:0000247"/>
    <property type="project" value="MGI"/>
</dbReference>
<dbReference type="GO" id="GO:0007218">
    <property type="term" value="P:neuropeptide signaling pathway"/>
    <property type="evidence" value="ECO:0000314"/>
    <property type="project" value="MGI"/>
</dbReference>
<dbReference type="GO" id="GO:0001503">
    <property type="term" value="P:ossification"/>
    <property type="evidence" value="ECO:0000315"/>
    <property type="project" value="MGI"/>
</dbReference>
<dbReference type="GO" id="GO:0045778">
    <property type="term" value="P:positive regulation of ossification"/>
    <property type="evidence" value="ECO:0000315"/>
    <property type="project" value="MGI"/>
</dbReference>
<dbReference type="GO" id="GO:0002027">
    <property type="term" value="P:regulation of heart rate"/>
    <property type="evidence" value="ECO:0000315"/>
    <property type="project" value="MGI"/>
</dbReference>
<dbReference type="GO" id="GO:0009408">
    <property type="term" value="P:response to heat"/>
    <property type="evidence" value="ECO:0000315"/>
    <property type="project" value="MGI"/>
</dbReference>
<dbReference type="GO" id="GO:0048265">
    <property type="term" value="P:response to pain"/>
    <property type="evidence" value="ECO:0000315"/>
    <property type="project" value="MGI"/>
</dbReference>
<dbReference type="GO" id="GO:0006939">
    <property type="term" value="P:smooth muscle contraction"/>
    <property type="evidence" value="ECO:0000314"/>
    <property type="project" value="MGI"/>
</dbReference>
<dbReference type="GO" id="GO:0048240">
    <property type="term" value="P:sperm capacitation"/>
    <property type="evidence" value="ECO:0000247"/>
    <property type="project" value="MGI"/>
</dbReference>
<dbReference type="Gene3D" id="6.10.250.2190">
    <property type="match status" value="1"/>
</dbReference>
<dbReference type="InterPro" id="IPR021117">
    <property type="entry name" value="Calcitonin-like"/>
</dbReference>
<dbReference type="InterPro" id="IPR021116">
    <property type="entry name" value="Calcitonin/adrenomedullin"/>
</dbReference>
<dbReference type="InterPro" id="IPR018360">
    <property type="entry name" value="Calcitonin_CS"/>
</dbReference>
<dbReference type="InterPro" id="IPR015476">
    <property type="entry name" value="Calcitonin_gene-rel_peptide"/>
</dbReference>
<dbReference type="InterPro" id="IPR001693">
    <property type="entry name" value="Calcitonin_peptide-like"/>
</dbReference>
<dbReference type="PANTHER" id="PTHR10505:SF3">
    <property type="entry name" value="CALCITONIN GENE-RELATED PEPTIDE 2"/>
    <property type="match status" value="1"/>
</dbReference>
<dbReference type="PANTHER" id="PTHR10505">
    <property type="entry name" value="CALCITONIN-RELATED"/>
    <property type="match status" value="1"/>
</dbReference>
<dbReference type="Pfam" id="PF00214">
    <property type="entry name" value="Calc_CGRP_IAPP"/>
    <property type="match status" value="1"/>
</dbReference>
<dbReference type="PRINTS" id="PR00817">
    <property type="entry name" value="CALCITONINB"/>
</dbReference>
<dbReference type="SMART" id="SM00113">
    <property type="entry name" value="CALCITONIN"/>
    <property type="match status" value="1"/>
</dbReference>
<dbReference type="PROSITE" id="PS00258">
    <property type="entry name" value="CALCITONIN"/>
    <property type="match status" value="1"/>
</dbReference>
<feature type="signal peptide" evidence="3">
    <location>
        <begin position="1"/>
        <end position="25"/>
    </location>
</feature>
<feature type="propeptide" id="PRO_0000004059" evidence="1">
    <location>
        <begin position="26"/>
        <end position="80"/>
    </location>
</feature>
<feature type="peptide" id="PRO_0000004060" description="Calcitonin gene-related peptide 1">
    <location>
        <begin position="83"/>
        <end position="119"/>
    </location>
</feature>
<feature type="propeptide" id="PRO_0000004061" evidence="1">
    <location>
        <begin position="125"/>
        <end position="128"/>
    </location>
</feature>
<feature type="modified residue" description="Phenylalanine amide" evidence="1">
    <location>
        <position position="119"/>
    </location>
</feature>
<feature type="disulfide bond" evidence="2">
    <location>
        <begin position="84"/>
        <end position="89"/>
    </location>
</feature>
<evidence type="ECO:0000250" key="1"/>
<evidence type="ECO:0000250" key="2">
    <source>
        <dbReference type="UniProtKB" id="P06881"/>
    </source>
</evidence>
<evidence type="ECO:0000255" key="3"/>
<evidence type="ECO:0000269" key="4">
    <source>
    </source>
</evidence>
<evidence type="ECO:0000305" key="5"/>
<evidence type="ECO:0000312" key="6">
    <source>
        <dbReference type="MGI" id="MGI:2151253"/>
    </source>
</evidence>
<keyword id="KW-0025">Alternative splicing</keyword>
<keyword id="KW-0027">Amidation</keyword>
<keyword id="KW-0165">Cleavage on pair of basic residues</keyword>
<keyword id="KW-1015">Disulfide bond</keyword>
<keyword id="KW-0372">Hormone</keyword>
<keyword id="KW-1185">Reference proteome</keyword>
<keyword id="KW-0964">Secreted</keyword>
<keyword id="KW-0732">Signal</keyword>
<comment type="function">
    <text evidence="2">CGRP1/CALCA is a peptide hormone that induces vasodilation mediated by the CALCRL-RAMP1 receptor complex. Dilates a variety of vessels including the coronary, cerebral and systemic vasculature. Its abundance in the CNS also points toward a neurotransmitter or neuromodulator role. It also elevates platelet cAMP. CGRP1 can also bind and activate CALCR-RAMP1 (AMYR1) receptor complex.</text>
</comment>
<comment type="subcellular location">
    <subcellularLocation>
        <location evidence="2">Secreted</location>
    </subcellularLocation>
</comment>
<comment type="alternative products">
    <event type="alternative splicing"/>
    <isoform>
        <id>Q99JA0-1</id>
        <name>Calcitonin-gene related peptide I</name>
        <sequence type="displayed"/>
    </isoform>
    <isoform>
        <id>P70160-1</id>
        <name>Calcitonin</name>
        <sequence type="external"/>
    </isoform>
</comment>
<comment type="tissue specificity">
    <text evidence="4">Detected in nerve cells of cerebrum, hippocampus and pons/midbrain in newborns, and only in nerve cells of pons/midbrain in adult.</text>
</comment>
<comment type="similarity">
    <text evidence="5">Belongs to the calcitonin family.</text>
</comment>
<proteinExistence type="evidence at transcript level"/>
<sequence length="128" mass="14065">MGFLKFSPFLVVSILLLYQACSLQAVPLRSILESSPGMATLSEEEVRLLAALVQDYMQMKARELEQEEEQEAEGSSVTAQKRSCNTATCVTHRLAGLLSRSGGVVKDNFVPTNVGSEAFGRRRRDLQA</sequence>
<reference key="1">
    <citation type="submission" date="2000-12" db="EMBL/GenBank/DDBJ databases">
        <title>Mouse CGRP precursor is highly homologous to that of the rat.</title>
        <authorList>
            <person name="Sarasa M."/>
            <person name="Catalan J."/>
            <person name="Aramayona J."/>
            <person name="Sorribas V."/>
        </authorList>
    </citation>
    <scope>NUCLEOTIDE SEQUENCE [MRNA]</scope>
</reference>
<reference key="2">
    <citation type="journal article" date="2001" name="DNA Seq.">
        <title>Structure of the mouse calcitonin/calcitonin gene-related peptide alpha and beta genes.</title>
        <authorList>
            <person name="Thomas P.M."/>
            <person name="Nasonkin I."/>
            <person name="Zhang H."/>
            <person name="Gagel R.F."/>
            <person name="Cote G.J."/>
        </authorList>
    </citation>
    <scope>NUCLEOTIDE SEQUENCE [GENOMIC DNA]</scope>
    <source>
        <strain>129/Sv</strain>
    </source>
</reference>
<reference key="3">
    <citation type="journal article" date="2004" name="Genome Res.">
        <title>The status, quality, and expansion of the NIH full-length cDNA project: the Mammalian Gene Collection (MGC).</title>
        <authorList>
            <consortium name="The MGC Project Team"/>
        </authorList>
    </citation>
    <scope>NUCLEOTIDE SEQUENCE [LARGE SCALE MRNA]</scope>
    <source>
        <strain>C57BL/6J</strain>
        <tissue>Mammary gland</tissue>
    </source>
</reference>
<reference key="4">
    <citation type="journal article" date="2008" name="Cytogenet. Genome Res.">
        <title>Genomic organization, expression and evolution of porcine CRSP1, 2, and 3.</title>
        <authorList>
            <person name="Rezaeian A.H."/>
            <person name="Katafuchi T."/>
            <person name="Yoshizawa M."/>
            <person name="Hiraiwa N."/>
            <person name="Saito T."/>
            <person name="Nishibori M."/>
            <person name="Hamano K."/>
            <person name="Minamino N."/>
            <person name="Yasue H."/>
        </authorList>
    </citation>
    <scope>TISSUE SPECIFICITY</scope>
</reference>
<protein>
    <recommendedName>
        <fullName>Calcitonin gene-related peptide 1</fullName>
        <shortName evidence="2">CGRP1</shortName>
    </recommendedName>
    <alternativeName>
        <fullName>Alpha-type CGRP</fullName>
    </alternativeName>
    <alternativeName>
        <fullName>Calcitonin gene-related peptide I</fullName>
        <shortName>CGRP-I</shortName>
    </alternativeName>
</protein>
<accession>Q99JA0</accession>
<organism>
    <name type="scientific">Mus musculus</name>
    <name type="common">Mouse</name>
    <dbReference type="NCBI Taxonomy" id="10090"/>
    <lineage>
        <taxon>Eukaryota</taxon>
        <taxon>Metazoa</taxon>
        <taxon>Chordata</taxon>
        <taxon>Craniata</taxon>
        <taxon>Vertebrata</taxon>
        <taxon>Euteleostomi</taxon>
        <taxon>Mammalia</taxon>
        <taxon>Eutheria</taxon>
        <taxon>Euarchontoglires</taxon>
        <taxon>Glires</taxon>
        <taxon>Rodentia</taxon>
        <taxon>Myomorpha</taxon>
        <taxon>Muroidea</taxon>
        <taxon>Muridae</taxon>
        <taxon>Murinae</taxon>
        <taxon>Mus</taxon>
        <taxon>Mus</taxon>
    </lineage>
</organism>
<gene>
    <name evidence="6" type="primary">Calca</name>
    <name type="synonym">Calc</name>
</gene>